<organism>
    <name type="scientific">Paxillus involutus</name>
    <name type="common">Naked brimcap</name>
    <dbReference type="NCBI Taxonomy" id="71150"/>
    <lineage>
        <taxon>Eukaryota</taxon>
        <taxon>Fungi</taxon>
        <taxon>Dikarya</taxon>
        <taxon>Basidiomycota</taxon>
        <taxon>Agaricomycotina</taxon>
        <taxon>Agaricomycetes</taxon>
        <taxon>Agaricomycetidae</taxon>
        <taxon>Boletales</taxon>
        <taxon>Paxilineae</taxon>
        <taxon>Paxillaceae</taxon>
        <taxon>Paxillus</taxon>
    </lineage>
</organism>
<feature type="chain" id="PRO_0000442624" description="Inactive atromentin synthetase invA6">
    <location>
        <begin position="1"/>
        <end position="952"/>
    </location>
</feature>
<feature type="domain" description="Carrier" evidence="2">
    <location>
        <begin position="594"/>
        <end position="672"/>
    </location>
</feature>
<feature type="region of interest" description="Adenylation (A) domain" evidence="1">
    <location>
        <begin position="58"/>
        <end position="462"/>
    </location>
</feature>
<feature type="region of interest" description="Thiolation and peptide carrier (T) domain" evidence="1">
    <location>
        <begin position="599"/>
        <end position="669"/>
    </location>
</feature>
<feature type="region of interest" description="Thioesterase (TE) domain" evidence="1">
    <location>
        <begin position="695"/>
        <end position="939"/>
    </location>
</feature>
<feature type="modified residue" description="O-(pantetheine 4'-phosphoryl)serine" evidence="2">
    <location>
        <position position="631"/>
    </location>
</feature>
<sequence length="952" mass="104905">MAPVAITPATLVGHDLKSSRASERATELSPVTLLDIFSRAVSLYPKHELSFVTSSAHDSSVQTRSFSEFDQYARALAWAMLAWGKPTGSVIVVYFTEHEDNMAAVWACLLAGHVPCLQPALSEQQAHKEGHVAHIKNLFSSATWLTNESGAEQVHSITGLDIRLLSELKARAETVGADFHAHQPNPDDEAILFLTSGSTGFSKVVVHTHRTILAACNAKGQSYGLTSESKTMNWVGFDHVAGSLEMHIAPLLYGASQLHVHVSAILADPSRFLRLIEEKSIQLAFAPNFLLAKLTRDLEKCSDLFGKFDLSSIKRINSGGEAVVSSTAQAFARTLKNFAKDGNASFVISAGFGTTETCAGCIYDPIDVLFTPPSYEFLELGTPLTGCEMCIVNPQDGVTPRPDGESGELQVRGPMVFVRYYNDPKATTSSFIEGVWYRTGDVGIIEKGKMRLNGRIKDTVIVHGVSYGIAELETYLQTVEGVTHSFLAAAPHRDPGQETEGFVIFYSPTFELDSEDAPAKLYATHRALRDVSVKMITLPPQQIIPIPLNQMEKTTLGKLSRVCLVNLFKQGELANHIARAEELLSIARGATFIAPSTETEKTLGRLYAEIFNLRVSDVSASDNFFELGGNSIDVIKLKREAESLFELPEILTVQILKHPVISSLAKYVDSLVSKDGSQEEYDPVVPLQLTSNKTPIFMVHPGIGEVLAYVDLAKYFQNERPFFALRVRGFEGQPLFTSMDEMASSYAAGAKRTQPHGPYAIAGYSYGGVVAFEVAKRLESMGDEVKFIGLVDIPPHIADRMHDWTSGMLNLSHLLGLMSKQDADNLAPSLRTLTRKEQFEVLWKLSPPERLTELQLTPEKHENWVYIAGGLSECGMTYQPGGSVSVLDVFYAMPPHDTKEDWLNQHLRRWADFCRSEPSFTNVPGHHDTLMDFDHVSGFQKIFRDALEARGL</sequence>
<name>INVA6_PAXIN</name>
<proteinExistence type="evidence at transcript level"/>
<reference key="1">
    <citation type="journal article" date="2015" name="Chem. Biol.">
        <title>Three redundant synthetases secure redox-active pigment production in the basidiomycete Paxillus involutus.</title>
        <authorList>
            <person name="Braesel J."/>
            <person name="Gotze S."/>
            <person name="Shah F."/>
            <person name="Heine D."/>
            <person name="Tauber J."/>
            <person name="Hertweck C."/>
            <person name="Tunlid A."/>
            <person name="Stallforth P."/>
            <person name="Hoffmeister D."/>
        </authorList>
    </citation>
    <scope>NUCLEOTIDE SEQUENCE [MRNA]</scope>
    <scope>FUNCTION</scope>
    <source>
        <strain>ATCC MYA-4647</strain>
    </source>
</reference>
<accession>A0A0S2E7W3</accession>
<keyword id="KW-0596">Phosphopantetheine</keyword>
<keyword id="KW-0597">Phosphoprotein</keyword>
<keyword id="KW-0808">Transferase</keyword>
<comment type="function">
    <text evidence="3">Inactive atromentin synthetase homolog. Does not accept 4-hydroxyphenylpyruvate (4-HPP) as substrate. Both the adenylation (A) and the thioesterase (TE) domain of the invA6 enzyme are inactive.</text>
</comment>
<comment type="similarity">
    <text evidence="4">Belongs to the ATP-dependent AMP-binding enzyme family.</text>
</comment>
<evidence type="ECO:0000255" key="1"/>
<evidence type="ECO:0000255" key="2">
    <source>
        <dbReference type="PROSITE-ProRule" id="PRU00258"/>
    </source>
</evidence>
<evidence type="ECO:0000269" key="3">
    <source>
    </source>
</evidence>
<evidence type="ECO:0000305" key="4"/>
<dbReference type="EMBL" id="KT958234">
    <property type="protein sequence ID" value="ALN66886.1"/>
    <property type="molecule type" value="mRNA"/>
</dbReference>
<dbReference type="SMR" id="A0A0S2E7W3"/>
<dbReference type="ESTHER" id="paxin-inva6">
    <property type="family name" value="Thioesterase"/>
</dbReference>
<dbReference type="GO" id="GO:0016740">
    <property type="term" value="F:transferase activity"/>
    <property type="evidence" value="ECO:0007669"/>
    <property type="project" value="UniProtKB-KW"/>
</dbReference>
<dbReference type="GO" id="GO:0009058">
    <property type="term" value="P:biosynthetic process"/>
    <property type="evidence" value="ECO:0007669"/>
    <property type="project" value="InterPro"/>
</dbReference>
<dbReference type="Gene3D" id="3.30.300.30">
    <property type="match status" value="1"/>
</dbReference>
<dbReference type="Gene3D" id="1.10.1200.10">
    <property type="entry name" value="ACP-like"/>
    <property type="match status" value="1"/>
</dbReference>
<dbReference type="Gene3D" id="3.40.50.1820">
    <property type="entry name" value="alpha/beta hydrolase"/>
    <property type="match status" value="1"/>
</dbReference>
<dbReference type="Gene3D" id="3.40.50.12780">
    <property type="entry name" value="N-terminal domain of ligase-like"/>
    <property type="match status" value="1"/>
</dbReference>
<dbReference type="InterPro" id="IPR029058">
    <property type="entry name" value="AB_hydrolase_fold"/>
</dbReference>
<dbReference type="InterPro" id="IPR036736">
    <property type="entry name" value="ACP-like_sf"/>
</dbReference>
<dbReference type="InterPro" id="IPR045851">
    <property type="entry name" value="AMP-bd_C_sf"/>
</dbReference>
<dbReference type="InterPro" id="IPR020845">
    <property type="entry name" value="AMP-binding_CS"/>
</dbReference>
<dbReference type="InterPro" id="IPR000873">
    <property type="entry name" value="AMP-dep_synth/lig_dom"/>
</dbReference>
<dbReference type="InterPro" id="IPR042099">
    <property type="entry name" value="ANL_N_sf"/>
</dbReference>
<dbReference type="InterPro" id="IPR050237">
    <property type="entry name" value="ATP-dep_AMP-bd_enzyme"/>
</dbReference>
<dbReference type="InterPro" id="IPR020802">
    <property type="entry name" value="PKS_thioesterase"/>
</dbReference>
<dbReference type="InterPro" id="IPR009081">
    <property type="entry name" value="PP-bd_ACP"/>
</dbReference>
<dbReference type="InterPro" id="IPR001031">
    <property type="entry name" value="Thioesterase"/>
</dbReference>
<dbReference type="PANTHER" id="PTHR43767">
    <property type="entry name" value="LONG-CHAIN-FATTY-ACID--COA LIGASE"/>
    <property type="match status" value="1"/>
</dbReference>
<dbReference type="PANTHER" id="PTHR43767:SF10">
    <property type="entry name" value="SURFACTIN SYNTHASE SUBUNIT 1"/>
    <property type="match status" value="1"/>
</dbReference>
<dbReference type="Pfam" id="PF00501">
    <property type="entry name" value="AMP-binding"/>
    <property type="match status" value="1"/>
</dbReference>
<dbReference type="Pfam" id="PF00550">
    <property type="entry name" value="PP-binding"/>
    <property type="match status" value="1"/>
</dbReference>
<dbReference type="Pfam" id="PF00975">
    <property type="entry name" value="Thioesterase"/>
    <property type="match status" value="1"/>
</dbReference>
<dbReference type="SMART" id="SM00824">
    <property type="entry name" value="PKS_TE"/>
    <property type="match status" value="1"/>
</dbReference>
<dbReference type="SUPFAM" id="SSF56801">
    <property type="entry name" value="Acetyl-CoA synthetase-like"/>
    <property type="match status" value="1"/>
</dbReference>
<dbReference type="SUPFAM" id="SSF47336">
    <property type="entry name" value="ACP-like"/>
    <property type="match status" value="1"/>
</dbReference>
<dbReference type="SUPFAM" id="SSF53474">
    <property type="entry name" value="alpha/beta-Hydrolases"/>
    <property type="match status" value="1"/>
</dbReference>
<dbReference type="PROSITE" id="PS00455">
    <property type="entry name" value="AMP_BINDING"/>
    <property type="match status" value="1"/>
</dbReference>
<dbReference type="PROSITE" id="PS50075">
    <property type="entry name" value="CARRIER"/>
    <property type="match status" value="1"/>
</dbReference>
<gene>
    <name type="primary">invA6</name>
</gene>
<protein>
    <recommendedName>
        <fullName>Inactive atromentin synthetase invA6</fullName>
    </recommendedName>
    <alternativeName>
        <fullName>Nonribosomal peptide synthase-like enzyme invA6</fullName>
        <shortName>NRPS-like</shortName>
    </alternativeName>
</protein>